<gene>
    <name type="primary">FBP1</name>
    <name type="ordered locus">YLR377C</name>
    <name type="ORF">L8039.18</name>
</gene>
<reference key="1">
    <citation type="journal article" date="1988" name="J. Biol. Chem.">
        <title>Characterization of the gene for fructose-1,6-bisphosphatase from Saccharomyces cerevisiae and Schizosaccharomyces pombe. Sequence, protein homology, and expression during growth on glucose.</title>
        <authorList>
            <person name="Rogers D.T."/>
            <person name="Hiller E."/>
            <person name="Mitsock L."/>
            <person name="Orr E."/>
        </authorList>
    </citation>
    <scope>NUCLEOTIDE SEQUENCE [GENOMIC DNA]</scope>
</reference>
<reference key="2">
    <citation type="journal article" date="1988" name="FEBS Lett.">
        <title>Isolation and primary structure of the gene encoding fructose-1,6-bisphosphatase from Saccharomyces cerevisiae.</title>
        <authorList>
            <person name="Entian K.-D."/>
            <person name="Vogel R.F."/>
            <person name="Rose M."/>
            <person name="Hofmann L."/>
            <person name="Mecke D."/>
        </authorList>
    </citation>
    <scope>NUCLEOTIDE SEQUENCE [GENOMIC DNA]</scope>
</reference>
<reference key="3">
    <citation type="journal article" date="1997" name="Nature">
        <title>The nucleotide sequence of Saccharomyces cerevisiae chromosome XII.</title>
        <authorList>
            <person name="Johnston M."/>
            <person name="Hillier L.W."/>
            <person name="Riles L."/>
            <person name="Albermann K."/>
            <person name="Andre B."/>
            <person name="Ansorge W."/>
            <person name="Benes V."/>
            <person name="Brueckner M."/>
            <person name="Delius H."/>
            <person name="Dubois E."/>
            <person name="Duesterhoeft A."/>
            <person name="Entian K.-D."/>
            <person name="Floeth M."/>
            <person name="Goffeau A."/>
            <person name="Hebling U."/>
            <person name="Heumann K."/>
            <person name="Heuss-Neitzel D."/>
            <person name="Hilbert H."/>
            <person name="Hilger F."/>
            <person name="Kleine K."/>
            <person name="Koetter P."/>
            <person name="Louis E.J."/>
            <person name="Messenguy F."/>
            <person name="Mewes H.-W."/>
            <person name="Miosga T."/>
            <person name="Moestl D."/>
            <person name="Mueller-Auer S."/>
            <person name="Nentwich U."/>
            <person name="Obermaier B."/>
            <person name="Piravandi E."/>
            <person name="Pohl T.M."/>
            <person name="Portetelle D."/>
            <person name="Purnelle B."/>
            <person name="Rechmann S."/>
            <person name="Rieger M."/>
            <person name="Rinke M."/>
            <person name="Rose M."/>
            <person name="Scharfe M."/>
            <person name="Scherens B."/>
            <person name="Scholler P."/>
            <person name="Schwager C."/>
            <person name="Schwarz S."/>
            <person name="Underwood A.P."/>
            <person name="Urrestarazu L.A."/>
            <person name="Vandenbol M."/>
            <person name="Verhasselt P."/>
            <person name="Vierendeels F."/>
            <person name="Voet M."/>
            <person name="Volckaert G."/>
            <person name="Voss H."/>
            <person name="Wambutt R."/>
            <person name="Wedler E."/>
            <person name="Wedler H."/>
            <person name="Zimmermann F.K."/>
            <person name="Zollner A."/>
            <person name="Hani J."/>
            <person name="Hoheisel J.D."/>
        </authorList>
    </citation>
    <scope>NUCLEOTIDE SEQUENCE [LARGE SCALE GENOMIC DNA]</scope>
    <source>
        <strain>ATCC 204508 / S288c</strain>
    </source>
</reference>
<reference key="4">
    <citation type="journal article" date="2014" name="G3 (Bethesda)">
        <title>The reference genome sequence of Saccharomyces cerevisiae: Then and now.</title>
        <authorList>
            <person name="Engel S.R."/>
            <person name="Dietrich F.S."/>
            <person name="Fisk D.G."/>
            <person name="Binkley G."/>
            <person name="Balakrishnan R."/>
            <person name="Costanzo M.C."/>
            <person name="Dwight S.S."/>
            <person name="Hitz B.C."/>
            <person name="Karra K."/>
            <person name="Nash R.S."/>
            <person name="Weng S."/>
            <person name="Wong E.D."/>
            <person name="Lloyd P."/>
            <person name="Skrzypek M.S."/>
            <person name="Miyasato S.R."/>
            <person name="Simison M."/>
            <person name="Cherry J.M."/>
        </authorList>
    </citation>
    <scope>GENOME REANNOTATION</scope>
    <source>
        <strain>ATCC 204508 / S288c</strain>
    </source>
</reference>
<reference key="5">
    <citation type="journal article" date="2007" name="Genome Res.">
        <title>Approaching a complete repository of sequence-verified protein-encoding clones for Saccharomyces cerevisiae.</title>
        <authorList>
            <person name="Hu Y."/>
            <person name="Rolfs A."/>
            <person name="Bhullar B."/>
            <person name="Murthy T.V.S."/>
            <person name="Zhu C."/>
            <person name="Berger M.F."/>
            <person name="Camargo A.A."/>
            <person name="Kelley F."/>
            <person name="McCarron S."/>
            <person name="Jepson D."/>
            <person name="Richardson A."/>
            <person name="Raphael J."/>
            <person name="Moreira D."/>
            <person name="Taycher E."/>
            <person name="Zuo D."/>
            <person name="Mohr S."/>
            <person name="Kane M.F."/>
            <person name="Williamson J."/>
            <person name="Simpson A.J.G."/>
            <person name="Bulyk M.L."/>
            <person name="Harlow E."/>
            <person name="Marsischky G."/>
            <person name="Kolodner R.D."/>
            <person name="LaBaer J."/>
        </authorList>
    </citation>
    <scope>NUCLEOTIDE SEQUENCE [GENOMIC DNA]</scope>
    <source>
        <strain>ATCC 204508 / S288c</strain>
    </source>
</reference>
<reference key="6">
    <citation type="journal article" date="1986" name="Biochem. Biophys. Res. Commun.">
        <title>Amino acid sequence homology among fructose-1,6-bisphosphatases.</title>
        <authorList>
            <person name="Marcus F."/>
            <person name="Gontero B."/>
            <person name="Harrsch P.B."/>
            <person name="Rittenhouse J."/>
        </authorList>
    </citation>
    <scope>PROTEIN SEQUENCE OF 2-16; 83-97; 256-280; 289-306 AND 327-346</scope>
</reference>
<reference key="7">
    <citation type="journal article" date="2003" name="Mol. Biol. Cell">
        <title>Catabolite degradation of fructose-1,6-bisphosphatase in the yeast Saccharomyces cerevisiae: a genome-wide screen identifies eight novel GID genes and indicates the existence of two degradation pathways.</title>
        <authorList>
            <person name="Regelmann J."/>
            <person name="Schuele T."/>
            <person name="Josupeit F.S."/>
            <person name="Horak J."/>
            <person name="Rose M."/>
            <person name="Entian K.-D."/>
            <person name="Thumm M."/>
            <person name="Wolf D.H."/>
        </authorList>
    </citation>
    <scope>PROTEASOMAL DEGRADATION</scope>
</reference>
<reference key="8">
    <citation type="journal article" date="2003" name="Nature">
        <title>Global analysis of protein expression in yeast.</title>
        <authorList>
            <person name="Ghaemmaghami S."/>
            <person name="Huh W.-K."/>
            <person name="Bower K."/>
            <person name="Howson R.W."/>
            <person name="Belle A."/>
            <person name="Dephoure N."/>
            <person name="O'Shea E.K."/>
            <person name="Weissman J.S."/>
        </authorList>
    </citation>
    <scope>LEVEL OF PROTEIN EXPRESSION [LARGE SCALE ANALYSIS]</scope>
</reference>
<reference key="9">
    <citation type="journal article" date="2008" name="Mol. Biol. Cell">
        <title>The yeast GID complex, a novel ubiquitin ligase (E3) involved in the regulation of carbohydrate metabolism.</title>
        <authorList>
            <person name="Santt O."/>
            <person name="Pfirrmann T."/>
            <person name="Braun B."/>
            <person name="Juretschke J."/>
            <person name="Kimmig P."/>
            <person name="Scheel H."/>
            <person name="Hofmann K."/>
            <person name="Thumm M."/>
            <person name="Wolf D.H."/>
        </authorList>
    </citation>
    <scope>PROTEASOMAL DEGRADATION</scope>
</reference>
<reference key="10">
    <citation type="journal article" date="2009" name="Science">
        <title>Global analysis of Cdk1 substrate phosphorylation sites provides insights into evolution.</title>
        <authorList>
            <person name="Holt L.J."/>
            <person name="Tuch B.B."/>
            <person name="Villen J."/>
            <person name="Johnson A.D."/>
            <person name="Gygi S.P."/>
            <person name="Morgan D.O."/>
        </authorList>
    </citation>
    <scope>PHOSPHORYLATION [LARGE SCALE ANALYSIS] AT SER-12</scope>
    <scope>IDENTIFICATION BY MASS SPECTROMETRY [LARGE SCALE ANALYSIS]</scope>
</reference>
<reference key="11">
    <citation type="journal article" date="2012" name="J. Biol. Chem.">
        <title>Exploring the topology of the Gid complex, the E3 ubiquitin ligase involved in catabolite-induced degradation of gluconeogenic enzymes.</title>
        <authorList>
            <person name="Menssen R."/>
            <person name="Schweiggert J."/>
            <person name="Schreiner J."/>
            <person name="Kusevic D."/>
            <person name="Reuther J."/>
            <person name="Braun B."/>
            <person name="Wolf D.H."/>
        </authorList>
    </citation>
    <scope>UBIQUITINATION</scope>
    <scope>PROTEASOMAL DEGRADATION</scope>
</reference>
<reference key="12">
    <citation type="journal article" date="2017" name="Science">
        <title>An N-end rule pathway that recognizes proline and destroys gluconeogenic enzymes.</title>
        <authorList>
            <person name="Chen S.J."/>
            <person name="Wu X."/>
            <person name="Wadas B."/>
            <person name="Oh J.H."/>
            <person name="Varshavsky A."/>
        </authorList>
    </citation>
    <scope>DOMAIN</scope>
    <scope>PROTEASOMAL DEGRADATION</scope>
    <scope>MUTAGENESIS OF PRO-2</scope>
</reference>
<organism>
    <name type="scientific">Saccharomyces cerevisiae (strain ATCC 204508 / S288c)</name>
    <name type="common">Baker's yeast</name>
    <dbReference type="NCBI Taxonomy" id="559292"/>
    <lineage>
        <taxon>Eukaryota</taxon>
        <taxon>Fungi</taxon>
        <taxon>Dikarya</taxon>
        <taxon>Ascomycota</taxon>
        <taxon>Saccharomycotina</taxon>
        <taxon>Saccharomycetes</taxon>
        <taxon>Saccharomycetales</taxon>
        <taxon>Saccharomycetaceae</taxon>
        <taxon>Saccharomyces</taxon>
    </lineage>
</organism>
<accession>P09201</accession>
<accession>D6VZ13</accession>
<feature type="initiator methionine" description="Removed" evidence="8">
    <location>
        <position position="1"/>
    </location>
</feature>
<feature type="chain" id="PRO_0000200511" description="Fructose-1,6-bisphosphatase">
    <location>
        <begin position="2"/>
        <end position="348"/>
    </location>
</feature>
<feature type="short sequence motif" description="Pro/N-degron" evidence="7">
    <location>
        <begin position="2"/>
        <end position="5"/>
    </location>
</feature>
<feature type="binding site" evidence="2">
    <location>
        <begin position="27"/>
        <end position="31"/>
    </location>
    <ligand>
        <name>AMP</name>
        <dbReference type="ChEBI" id="CHEBI:456215"/>
    </ligand>
</feature>
<feature type="binding site" evidence="2">
    <location>
        <begin position="38"/>
        <end position="42"/>
    </location>
    <ligand>
        <name>AMP</name>
        <dbReference type="ChEBI" id="CHEBI:456215"/>
    </ligand>
</feature>
<feature type="binding site" evidence="2">
    <location>
        <position position="79"/>
    </location>
    <ligand>
        <name>Mg(2+)</name>
        <dbReference type="ChEBI" id="CHEBI:18420"/>
        <label>1</label>
    </ligand>
</feature>
<feature type="binding site" evidence="2">
    <location>
        <position position="108"/>
    </location>
    <ligand>
        <name>Mg(2+)</name>
        <dbReference type="ChEBI" id="CHEBI:18420"/>
        <label>1</label>
    </ligand>
</feature>
<feature type="binding site" evidence="2">
    <location>
        <position position="108"/>
    </location>
    <ligand>
        <name>Mg(2+)</name>
        <dbReference type="ChEBI" id="CHEBI:18420"/>
        <label>2</label>
    </ligand>
</feature>
<feature type="binding site" evidence="2">
    <location>
        <begin position="122"/>
        <end position="123"/>
    </location>
    <ligand>
        <name>AMP</name>
        <dbReference type="ChEBI" id="CHEBI:456215"/>
    </ligand>
</feature>
<feature type="binding site" evidence="2">
    <location>
        <position position="128"/>
    </location>
    <ligand>
        <name>Mg(2+)</name>
        <dbReference type="ChEBI" id="CHEBI:18420"/>
        <label>2</label>
    </ligand>
</feature>
<feature type="binding site" evidence="2">
    <location>
        <position position="128"/>
    </location>
    <ligand>
        <name>Mg(2+)</name>
        <dbReference type="ChEBI" id="CHEBI:18420"/>
        <label>3</label>
    </ligand>
</feature>
<feature type="binding site" evidence="2">
    <location>
        <position position="130"/>
    </location>
    <ligand>
        <name>Mg(2+)</name>
        <dbReference type="ChEBI" id="CHEBI:18420"/>
        <label>2</label>
    </ligand>
</feature>
<feature type="binding site" evidence="2">
    <location>
        <begin position="131"/>
        <end position="134"/>
    </location>
    <ligand>
        <name>substrate</name>
    </ligand>
</feature>
<feature type="binding site" evidence="2">
    <location>
        <position position="131"/>
    </location>
    <ligand>
        <name>Mg(2+)</name>
        <dbReference type="ChEBI" id="CHEBI:18420"/>
        <label>3</label>
    </ligand>
</feature>
<feature type="binding site" evidence="2">
    <location>
        <position position="150"/>
    </location>
    <ligand>
        <name>AMP</name>
        <dbReference type="ChEBI" id="CHEBI:456215"/>
    </ligand>
</feature>
<feature type="binding site" evidence="2">
    <location>
        <begin position="222"/>
        <end position="225"/>
    </location>
    <ligand>
        <name>substrate</name>
    </ligand>
</feature>
<feature type="binding site" evidence="2">
    <location>
        <begin position="255"/>
        <end position="260"/>
    </location>
    <ligand>
        <name>substrate</name>
    </ligand>
</feature>
<feature type="binding site" evidence="2">
    <location>
        <position position="276"/>
    </location>
    <ligand>
        <name>substrate</name>
    </ligand>
</feature>
<feature type="binding site" evidence="2">
    <location>
        <begin position="286"/>
        <end position="288"/>
    </location>
    <ligand>
        <name>substrate</name>
    </ligand>
</feature>
<feature type="binding site" evidence="2">
    <location>
        <position position="292"/>
    </location>
    <ligand>
        <name>Mg(2+)</name>
        <dbReference type="ChEBI" id="CHEBI:18420"/>
        <label>3</label>
    </ligand>
</feature>
<feature type="modified residue" description="Phosphoserine" evidence="10">
    <location>
        <position position="12"/>
    </location>
</feature>
<feature type="mutagenesis site" description="Loss of proteasomal degradation in response to shift to glucose-containing growth medium." evidence="7">
    <original>P</original>
    <variation>S</variation>
    <location>
        <position position="2"/>
    </location>
</feature>
<feature type="sequence conflict" description="In Ref. 6; AA sequence." evidence="9" ref="6">
    <original>C</original>
    <variation>D</variation>
    <location>
        <position position="278"/>
    </location>
</feature>
<feature type="helix" evidence="11">
    <location>
        <begin position="23"/>
        <end position="31"/>
    </location>
</feature>
<feature type="helix" evidence="11">
    <location>
        <begin position="40"/>
        <end position="61"/>
    </location>
</feature>
<feature type="helix" evidence="11">
    <location>
        <begin position="64"/>
        <end position="67"/>
    </location>
</feature>
<feature type="helix" evidence="11">
    <location>
        <begin position="84"/>
        <end position="98"/>
    </location>
</feature>
<feature type="strand" evidence="11">
    <location>
        <begin position="102"/>
        <end position="107"/>
    </location>
</feature>
<feature type="strand" evidence="11">
    <location>
        <begin position="123"/>
        <end position="131"/>
    </location>
</feature>
<feature type="helix" evidence="11">
    <location>
        <begin position="133"/>
        <end position="138"/>
    </location>
</feature>
<feature type="strand" evidence="11">
    <location>
        <begin position="142"/>
        <end position="150"/>
    </location>
</feature>
<feature type="helix" evidence="11">
    <location>
        <begin position="159"/>
        <end position="161"/>
    </location>
</feature>
<feature type="helix" evidence="11">
    <location>
        <begin position="166"/>
        <end position="168"/>
    </location>
</feature>
<feature type="strand" evidence="11">
    <location>
        <begin position="170"/>
        <end position="189"/>
    </location>
</feature>
<feature type="strand" evidence="11">
    <location>
        <begin position="192"/>
        <end position="197"/>
    </location>
</feature>
<feature type="turn" evidence="11">
    <location>
        <begin position="198"/>
        <end position="201"/>
    </location>
</feature>
<feature type="strand" evidence="11">
    <location>
        <begin position="202"/>
        <end position="207"/>
    </location>
</feature>
<feature type="strand" evidence="11">
    <location>
        <begin position="218"/>
        <end position="220"/>
    </location>
</feature>
<feature type="helix" evidence="11">
    <location>
        <begin position="223"/>
        <end position="228"/>
    </location>
</feature>
<feature type="helix" evidence="11">
    <location>
        <begin position="231"/>
        <end position="240"/>
    </location>
</feature>
<feature type="helix" evidence="11">
    <location>
        <begin position="245"/>
        <end position="247"/>
    </location>
</feature>
<feature type="helix" evidence="11">
    <location>
        <begin position="260"/>
        <end position="270"/>
    </location>
</feature>
<feature type="strand" evidence="11">
    <location>
        <begin position="273"/>
        <end position="276"/>
    </location>
</feature>
<feature type="strand" evidence="11">
    <location>
        <begin position="286"/>
        <end position="288"/>
    </location>
</feature>
<feature type="turn" evidence="11">
    <location>
        <begin position="289"/>
        <end position="292"/>
    </location>
</feature>
<feature type="helix" evidence="11">
    <location>
        <begin position="293"/>
        <end position="302"/>
    </location>
</feature>
<feature type="strand" evidence="11">
    <location>
        <begin position="306"/>
        <end position="308"/>
    </location>
</feature>
<feature type="helix" evidence="11">
    <location>
        <begin position="315"/>
        <end position="317"/>
    </location>
</feature>
<feature type="strand" evidence="11">
    <location>
        <begin position="329"/>
        <end position="332"/>
    </location>
</feature>
<feature type="helix" evidence="11">
    <location>
        <begin position="334"/>
        <end position="347"/>
    </location>
</feature>
<keyword id="KW-0002">3D-structure</keyword>
<keyword id="KW-0021">Allosteric enzyme</keyword>
<keyword id="KW-0119">Carbohydrate metabolism</keyword>
<keyword id="KW-0903">Direct protein sequencing</keyword>
<keyword id="KW-0378">Hydrolase</keyword>
<keyword id="KW-0460">Magnesium</keyword>
<keyword id="KW-0479">Metal-binding</keyword>
<keyword id="KW-0597">Phosphoprotein</keyword>
<keyword id="KW-1185">Reference proteome</keyword>
<keyword id="KW-0832">Ubl conjugation</keyword>
<dbReference type="EC" id="3.1.3.11"/>
<dbReference type="EMBL" id="Y00754">
    <property type="protein sequence ID" value="CAA68723.1"/>
    <property type="molecule type" value="Genomic_DNA"/>
</dbReference>
<dbReference type="EMBL" id="J03207">
    <property type="protein sequence ID" value="AAA34603.1"/>
    <property type="molecule type" value="Genomic_DNA"/>
</dbReference>
<dbReference type="EMBL" id="U19103">
    <property type="protein sequence ID" value="AAB67579.1"/>
    <property type="molecule type" value="Genomic_DNA"/>
</dbReference>
<dbReference type="EMBL" id="AY692816">
    <property type="protein sequence ID" value="AAT92835.1"/>
    <property type="molecule type" value="Genomic_DNA"/>
</dbReference>
<dbReference type="EMBL" id="BK006945">
    <property type="protein sequence ID" value="DAA09679.1"/>
    <property type="molecule type" value="Genomic_DNA"/>
</dbReference>
<dbReference type="PIR" id="S01127">
    <property type="entry name" value="PABY"/>
</dbReference>
<dbReference type="RefSeq" id="NP_013481.3">
    <property type="nucleotide sequence ID" value="NM_001182266.3"/>
</dbReference>
<dbReference type="PDB" id="7NS5">
    <property type="method" value="X-ray"/>
    <property type="resolution" value="1.95 A"/>
    <property type="chains" value="A/B/C/D=1-348"/>
</dbReference>
<dbReference type="PDBsum" id="7NS5"/>
<dbReference type="SMR" id="P09201"/>
<dbReference type="BioGRID" id="31636">
    <property type="interactions" value="98"/>
</dbReference>
<dbReference type="DIP" id="DIP-3986N"/>
<dbReference type="FunCoup" id="P09201">
    <property type="interactions" value="772"/>
</dbReference>
<dbReference type="IntAct" id="P09201">
    <property type="interactions" value="4"/>
</dbReference>
<dbReference type="MINT" id="P09201"/>
<dbReference type="STRING" id="4932.YLR377C"/>
<dbReference type="iPTMnet" id="P09201"/>
<dbReference type="PaxDb" id="4932-YLR377C"/>
<dbReference type="PeptideAtlas" id="P09201"/>
<dbReference type="EnsemblFungi" id="YLR377C_mRNA">
    <property type="protein sequence ID" value="YLR377C"/>
    <property type="gene ID" value="YLR377C"/>
</dbReference>
<dbReference type="GeneID" id="851092"/>
<dbReference type="KEGG" id="sce:YLR377C"/>
<dbReference type="AGR" id="SGD:S000004369"/>
<dbReference type="SGD" id="S000004369">
    <property type="gene designation" value="FBP1"/>
</dbReference>
<dbReference type="VEuPathDB" id="FungiDB:YLR377C"/>
<dbReference type="eggNOG" id="KOG1458">
    <property type="taxonomic scope" value="Eukaryota"/>
</dbReference>
<dbReference type="GeneTree" id="ENSGT00390000015513"/>
<dbReference type="HOGENOM" id="CLU_039977_1_0_1"/>
<dbReference type="InParanoid" id="P09201"/>
<dbReference type="OMA" id="YIPENCP"/>
<dbReference type="OrthoDB" id="10256725at2759"/>
<dbReference type="BioCyc" id="YEAST:YLR377C-MONOMER"/>
<dbReference type="BRENDA" id="3.1.3.11">
    <property type="organism ID" value="984"/>
</dbReference>
<dbReference type="Reactome" id="R-SCE-70263">
    <property type="pathway name" value="Gluconeogenesis"/>
</dbReference>
<dbReference type="UniPathway" id="UPA00138"/>
<dbReference type="BioGRID-ORCS" id="851092">
    <property type="hits" value="1 hit in 10 CRISPR screens"/>
</dbReference>
<dbReference type="PRO" id="PR:P09201"/>
<dbReference type="Proteomes" id="UP000002311">
    <property type="component" value="Chromosome XII"/>
</dbReference>
<dbReference type="RNAct" id="P09201">
    <property type="molecule type" value="protein"/>
</dbReference>
<dbReference type="GO" id="GO:0005737">
    <property type="term" value="C:cytoplasm"/>
    <property type="evidence" value="ECO:0000318"/>
    <property type="project" value="GO_Central"/>
</dbReference>
<dbReference type="GO" id="GO:0005829">
    <property type="term" value="C:cytosol"/>
    <property type="evidence" value="ECO:0000314"/>
    <property type="project" value="SGD"/>
</dbReference>
<dbReference type="GO" id="GO:0042597">
    <property type="term" value="C:periplasmic space"/>
    <property type="evidence" value="ECO:0000314"/>
    <property type="project" value="SGD"/>
</dbReference>
<dbReference type="GO" id="GO:0042132">
    <property type="term" value="F:fructose 1,6-bisphosphate 1-phosphatase activity"/>
    <property type="evidence" value="ECO:0000314"/>
    <property type="project" value="SGD"/>
</dbReference>
<dbReference type="GO" id="GO:0046872">
    <property type="term" value="F:metal ion binding"/>
    <property type="evidence" value="ECO:0007669"/>
    <property type="project" value="UniProtKB-KW"/>
</dbReference>
<dbReference type="GO" id="GO:0030388">
    <property type="term" value="P:fructose 1,6-bisphosphate metabolic process"/>
    <property type="evidence" value="ECO:0000318"/>
    <property type="project" value="GO_Central"/>
</dbReference>
<dbReference type="GO" id="GO:0006002">
    <property type="term" value="P:fructose 6-phosphate metabolic process"/>
    <property type="evidence" value="ECO:0000318"/>
    <property type="project" value="GO_Central"/>
</dbReference>
<dbReference type="GO" id="GO:0006000">
    <property type="term" value="P:fructose metabolic process"/>
    <property type="evidence" value="ECO:0000318"/>
    <property type="project" value="GO_Central"/>
</dbReference>
<dbReference type="GO" id="GO:0006094">
    <property type="term" value="P:gluconeogenesis"/>
    <property type="evidence" value="ECO:0000315"/>
    <property type="project" value="SGD"/>
</dbReference>
<dbReference type="GO" id="GO:0072593">
    <property type="term" value="P:reactive oxygen species metabolic process"/>
    <property type="evidence" value="ECO:0000315"/>
    <property type="project" value="SGD"/>
</dbReference>
<dbReference type="CDD" id="cd00354">
    <property type="entry name" value="FBPase"/>
    <property type="match status" value="1"/>
</dbReference>
<dbReference type="FunFam" id="3.30.540.10:FF:000009">
    <property type="entry name" value="Fructose-1,6-bisphosphatase"/>
    <property type="match status" value="1"/>
</dbReference>
<dbReference type="FunFam" id="3.40.190.80:FF:000001">
    <property type="entry name" value="Fructose-1,6-bisphosphatase class 1"/>
    <property type="match status" value="1"/>
</dbReference>
<dbReference type="Gene3D" id="3.40.190.80">
    <property type="match status" value="1"/>
</dbReference>
<dbReference type="Gene3D" id="3.30.540.10">
    <property type="entry name" value="Fructose-1,6-Bisphosphatase, subunit A, domain 1"/>
    <property type="match status" value="1"/>
</dbReference>
<dbReference type="HAMAP" id="MF_01855">
    <property type="entry name" value="FBPase_class1"/>
    <property type="match status" value="1"/>
</dbReference>
<dbReference type="InterPro" id="IPR044015">
    <property type="entry name" value="FBPase_C_dom"/>
</dbReference>
<dbReference type="InterPro" id="IPR000146">
    <property type="entry name" value="FBPase_class-1"/>
</dbReference>
<dbReference type="InterPro" id="IPR033391">
    <property type="entry name" value="FBPase_N"/>
</dbReference>
<dbReference type="InterPro" id="IPR028343">
    <property type="entry name" value="FBPtase"/>
</dbReference>
<dbReference type="InterPro" id="IPR020548">
    <property type="entry name" value="Fructose_bisphosphatase_AS"/>
</dbReference>
<dbReference type="NCBIfam" id="NF006778">
    <property type="entry name" value="PRK09293.1-1"/>
    <property type="match status" value="1"/>
</dbReference>
<dbReference type="PANTHER" id="PTHR11556">
    <property type="entry name" value="FRUCTOSE-1,6-BISPHOSPHATASE-RELATED"/>
    <property type="match status" value="1"/>
</dbReference>
<dbReference type="PANTHER" id="PTHR11556:SF1">
    <property type="entry name" value="FRUCTOSE-BISPHOSPHATASE"/>
    <property type="match status" value="1"/>
</dbReference>
<dbReference type="Pfam" id="PF00316">
    <property type="entry name" value="FBPase"/>
    <property type="match status" value="1"/>
</dbReference>
<dbReference type="Pfam" id="PF18913">
    <property type="entry name" value="FBPase_C"/>
    <property type="match status" value="1"/>
</dbReference>
<dbReference type="PIRSF" id="PIRSF500210">
    <property type="entry name" value="FBPtase"/>
    <property type="match status" value="1"/>
</dbReference>
<dbReference type="PIRSF" id="PIRSF000904">
    <property type="entry name" value="FBPtase_SBPase"/>
    <property type="match status" value="1"/>
</dbReference>
<dbReference type="PRINTS" id="PR00115">
    <property type="entry name" value="F16BPHPHTASE"/>
</dbReference>
<dbReference type="SUPFAM" id="SSF56655">
    <property type="entry name" value="Carbohydrate phosphatase"/>
    <property type="match status" value="1"/>
</dbReference>
<dbReference type="PROSITE" id="PS00124">
    <property type="entry name" value="FBPASE"/>
    <property type="match status" value="1"/>
</dbReference>
<protein>
    <recommendedName>
        <fullName>Fructose-1,6-bisphosphatase</fullName>
        <shortName>FBPase</shortName>
        <ecNumber>3.1.3.11</ecNumber>
    </recommendedName>
    <alternativeName>
        <fullName>D-fructose-1,6-bisphosphate 1-phosphohydrolase</fullName>
    </alternativeName>
</protein>
<proteinExistence type="evidence at protein level"/>
<name>F16P_YEAST</name>
<evidence type="ECO:0000250" key="1"/>
<evidence type="ECO:0000250" key="2">
    <source>
        <dbReference type="UniProtKB" id="P00636"/>
    </source>
</evidence>
<evidence type="ECO:0000269" key="3">
    <source>
    </source>
</evidence>
<evidence type="ECO:0000269" key="4">
    <source>
    </source>
</evidence>
<evidence type="ECO:0000269" key="5">
    <source>
    </source>
</evidence>
<evidence type="ECO:0000269" key="6">
    <source>
    </source>
</evidence>
<evidence type="ECO:0000269" key="7">
    <source>
    </source>
</evidence>
<evidence type="ECO:0000269" key="8">
    <source>
    </source>
</evidence>
<evidence type="ECO:0000305" key="9"/>
<evidence type="ECO:0007744" key="10">
    <source>
    </source>
</evidence>
<evidence type="ECO:0007829" key="11">
    <source>
        <dbReference type="PDB" id="7NS5"/>
    </source>
</evidence>
<comment type="catalytic activity">
    <reaction>
        <text>beta-D-fructose 1,6-bisphosphate + H2O = beta-D-fructose 6-phosphate + phosphate</text>
        <dbReference type="Rhea" id="RHEA:11064"/>
        <dbReference type="ChEBI" id="CHEBI:15377"/>
        <dbReference type="ChEBI" id="CHEBI:32966"/>
        <dbReference type="ChEBI" id="CHEBI:43474"/>
        <dbReference type="ChEBI" id="CHEBI:57634"/>
        <dbReference type="EC" id="3.1.3.11"/>
    </reaction>
</comment>
<comment type="cofactor">
    <cofactor evidence="2">
        <name>Mg(2+)</name>
        <dbReference type="ChEBI" id="CHEBI:18420"/>
    </cofactor>
    <text evidence="2">Binds 3 Mg(2+) ions per subunit.</text>
</comment>
<comment type="activity regulation">
    <text evidence="1">Subject to complex allosteric regulation. The enzyme can assume an active R-state, or an inactive T-state. Intermediate conformations may exist. AMP acts as allosteric inhibitor. AMP binding affects the turnover of bound substrate and not the affinity for substrate (By similarity).</text>
</comment>
<comment type="pathway">
    <text>Carbohydrate biosynthesis; gluconeogenesis.</text>
</comment>
<comment type="subunit">
    <text evidence="2">Homotetramer.</text>
</comment>
<comment type="domain">
    <text evidence="7">The Pro/N-degron targets the protein for proteasomal degradation when cells are shifted to glucose-containing growth medium.</text>
</comment>
<comment type="PTM">
    <text evidence="3 5 6 7">Ubiquitinated (PubMed:22645139). Targeted for proteasomal degradation when cells are shifted to glucose-containing growth medium (PubMed:12686616, PubMed:18508925, PubMed:22645139, PubMed:28126757).</text>
</comment>
<comment type="miscellaneous">
    <text evidence="4">Present with 589 molecules/cell in log phase SD medium.</text>
</comment>
<comment type="similarity">
    <text evidence="9">Belongs to the FBPase class 1 family.</text>
</comment>
<sequence>MPTLVNGPRRDSTEGFDTDIITLPRFIIEHQKQFKNATGDFTLVLNALQFAFKFVSHTIRRAELVNLVGLAGASNFTGDQQKKLDVLGDEIFINAMRASGIIKVLVSEEQEDLIVFPTNTGSYAVCCDPIDGSSNLDAGVSVGTIASIFRLLPDSSGTINDVLRCGKEMVAACYAMYGSSTHLVLTLGDGVDGFTLDTNLGEFILTHPNLRIPPQKAIYSINEGNTLYWNETIRTFIEKVKQPQADNNNKPFSARYVGSMVADVHRTFLYGGLFAYPCDKKSPNGKLRLLYEAFPMAFLMEQAGGKAVNDRGERILDLVPSHIHDKSSIWLGSSGEIDKFLDHIGKSQ</sequence>